<reference key="1">
    <citation type="journal article" date="1998" name="Nature">
        <title>Deciphering the biology of Mycobacterium tuberculosis from the complete genome sequence.</title>
        <authorList>
            <person name="Cole S.T."/>
            <person name="Brosch R."/>
            <person name="Parkhill J."/>
            <person name="Garnier T."/>
            <person name="Churcher C.M."/>
            <person name="Harris D.E."/>
            <person name="Gordon S.V."/>
            <person name="Eiglmeier K."/>
            <person name="Gas S."/>
            <person name="Barry C.E. III"/>
            <person name="Tekaia F."/>
            <person name="Badcock K."/>
            <person name="Basham D."/>
            <person name="Brown D."/>
            <person name="Chillingworth T."/>
            <person name="Connor R."/>
            <person name="Davies R.M."/>
            <person name="Devlin K."/>
            <person name="Feltwell T."/>
            <person name="Gentles S."/>
            <person name="Hamlin N."/>
            <person name="Holroyd S."/>
            <person name="Hornsby T."/>
            <person name="Jagels K."/>
            <person name="Krogh A."/>
            <person name="McLean J."/>
            <person name="Moule S."/>
            <person name="Murphy L.D."/>
            <person name="Oliver S."/>
            <person name="Osborne J."/>
            <person name="Quail M.A."/>
            <person name="Rajandream M.A."/>
            <person name="Rogers J."/>
            <person name="Rutter S."/>
            <person name="Seeger K."/>
            <person name="Skelton S."/>
            <person name="Squares S."/>
            <person name="Squares R."/>
            <person name="Sulston J.E."/>
            <person name="Taylor K."/>
            <person name="Whitehead S."/>
            <person name="Barrell B.G."/>
        </authorList>
    </citation>
    <scope>NUCLEOTIDE SEQUENCE [LARGE SCALE GENOMIC DNA]</scope>
    <source>
        <strain>ATCC 25618 / H37Rv</strain>
    </source>
</reference>
<reference key="2">
    <citation type="journal article" date="2006" name="J. Bacteriol.">
        <title>Inactivation of Rv2525c, a substrate of the twin arginine translocation (Tat) system of Mycobacterium tuberculosis, increases beta-lactam susceptibility and virulence.</title>
        <authorList>
            <person name="Saint-Joanis B."/>
            <person name="Demangel C."/>
            <person name="Jackson M."/>
            <person name="Brodin P."/>
            <person name="Marsollier L."/>
            <person name="Boshoff H."/>
            <person name="Cole S.T."/>
        </authorList>
    </citation>
    <scope>DISRUPTION PHENOTYPE</scope>
    <source>
        <strain>H37Rv</strain>
    </source>
</reference>
<reference key="3">
    <citation type="journal article" date="2011" name="Mol. Cell. Proteomics">
        <title>Proteogenomic analysis of Mycobacterium tuberculosis by high resolution mass spectrometry.</title>
        <authorList>
            <person name="Kelkar D.S."/>
            <person name="Kumar D."/>
            <person name="Kumar P."/>
            <person name="Balakrishnan L."/>
            <person name="Muthusamy B."/>
            <person name="Yadav A.K."/>
            <person name="Shrivastava P."/>
            <person name="Marimuthu A."/>
            <person name="Anand S."/>
            <person name="Sundaram H."/>
            <person name="Kingsbury R."/>
            <person name="Harsha H.C."/>
            <person name="Nair B."/>
            <person name="Prasad T.S."/>
            <person name="Chauhan D.S."/>
            <person name="Katoch K."/>
            <person name="Katoch V.M."/>
            <person name="Kumar P."/>
            <person name="Chaerkady R."/>
            <person name="Ramachandran S."/>
            <person name="Dash D."/>
            <person name="Pandey A."/>
        </authorList>
    </citation>
    <scope>IDENTIFICATION BY MASS SPECTROMETRY [LARGE SCALE ANALYSIS]</scope>
    <source>
        <strain>ATCC 25618 / H37Rv</strain>
    </source>
</reference>
<comment type="function">
    <text evidence="1">Part of the twin-arginine translocation (Tat) system that transports large folded proteins containing a characteristic twin-arginine motif in their signal peptide across membranes. TatA could form the protein-conducting channel of the Tat system.</text>
</comment>
<comment type="subunit">
    <text evidence="1">The Tat system comprises two distinct complexes: a TatABC complex, containing multiple copies of TatA, TatB and TatC subunits, and a separate TatA complex, containing only TatA subunits. Substrates initially bind to the TatABC complex, which probably triggers association of the separate TatA complex to form the active translocon.</text>
</comment>
<comment type="subcellular location">
    <subcellularLocation>
        <location evidence="1">Cell membrane</location>
        <topology evidence="1">Single-pass membrane protein</topology>
    </subcellularLocation>
</comment>
<comment type="disruption phenotype">
    <text evidence="3">Essential for growth.</text>
</comment>
<comment type="similarity">
    <text evidence="1">Belongs to the TatA/E family.</text>
</comment>
<sequence length="83" mass="8941">MGSLSPWHWAILAVVVIVLFGAKKLPDAARSLGKSLRIFKSEVRELQNENKAEASIETPTPVQSQRVDPSAASGQDSTEARPA</sequence>
<evidence type="ECO:0000255" key="1">
    <source>
        <dbReference type="HAMAP-Rule" id="MF_00236"/>
    </source>
</evidence>
<evidence type="ECO:0000256" key="2">
    <source>
        <dbReference type="SAM" id="MobiDB-lite"/>
    </source>
</evidence>
<evidence type="ECO:0000269" key="3">
    <source>
    </source>
</evidence>
<name>TATA_MYCTU</name>
<dbReference type="EMBL" id="AL123456">
    <property type="protein sequence ID" value="CCP44869.1"/>
    <property type="molecule type" value="Genomic_DNA"/>
</dbReference>
<dbReference type="PIR" id="A70768">
    <property type="entry name" value="A70768"/>
</dbReference>
<dbReference type="RefSeq" id="NP_216610.1">
    <property type="nucleotide sequence ID" value="NC_000962.3"/>
</dbReference>
<dbReference type="RefSeq" id="WP_003410768.1">
    <property type="nucleotide sequence ID" value="NZ_NVQJ01000061.1"/>
</dbReference>
<dbReference type="SMR" id="P9WGA1"/>
<dbReference type="FunCoup" id="P9WGA1">
    <property type="interactions" value="6"/>
</dbReference>
<dbReference type="STRING" id="83332.Rv2094c"/>
<dbReference type="PaxDb" id="83332-Rv2094c"/>
<dbReference type="DNASU" id="888086"/>
<dbReference type="GeneID" id="45426071"/>
<dbReference type="GeneID" id="888086"/>
<dbReference type="KEGG" id="mtu:Rv2094c"/>
<dbReference type="KEGG" id="mtv:RVBD_2094c"/>
<dbReference type="TubercuList" id="Rv2094c"/>
<dbReference type="eggNOG" id="COG1826">
    <property type="taxonomic scope" value="Bacteria"/>
</dbReference>
<dbReference type="InParanoid" id="P9WGA1"/>
<dbReference type="OrthoDB" id="5245163at2"/>
<dbReference type="PhylomeDB" id="P9WGA1"/>
<dbReference type="Proteomes" id="UP000001584">
    <property type="component" value="Chromosome"/>
</dbReference>
<dbReference type="GO" id="GO:0033281">
    <property type="term" value="C:TAT protein transport complex"/>
    <property type="evidence" value="ECO:0007669"/>
    <property type="project" value="UniProtKB-UniRule"/>
</dbReference>
<dbReference type="GO" id="GO:0008320">
    <property type="term" value="F:protein transmembrane transporter activity"/>
    <property type="evidence" value="ECO:0007669"/>
    <property type="project" value="UniProtKB-UniRule"/>
</dbReference>
<dbReference type="GO" id="GO:0043953">
    <property type="term" value="P:protein transport by the Tat complex"/>
    <property type="evidence" value="ECO:0007669"/>
    <property type="project" value="UniProtKB-UniRule"/>
</dbReference>
<dbReference type="Gene3D" id="1.20.5.3310">
    <property type="match status" value="1"/>
</dbReference>
<dbReference type="HAMAP" id="MF_00236">
    <property type="entry name" value="TatA_E"/>
    <property type="match status" value="1"/>
</dbReference>
<dbReference type="InterPro" id="IPR003369">
    <property type="entry name" value="TatA/B/E"/>
</dbReference>
<dbReference type="InterPro" id="IPR006312">
    <property type="entry name" value="TatA/E"/>
</dbReference>
<dbReference type="NCBIfam" id="NF001854">
    <property type="entry name" value="PRK00575.1"/>
    <property type="match status" value="1"/>
</dbReference>
<dbReference type="NCBIfam" id="TIGR01411">
    <property type="entry name" value="tatAE"/>
    <property type="match status" value="1"/>
</dbReference>
<dbReference type="PANTHER" id="PTHR42982">
    <property type="entry name" value="SEC-INDEPENDENT PROTEIN TRANSLOCASE PROTEIN TATA"/>
    <property type="match status" value="1"/>
</dbReference>
<dbReference type="PANTHER" id="PTHR42982:SF8">
    <property type="entry name" value="SEC-INDEPENDENT PROTEIN TRANSLOCASE PROTEIN TATA"/>
    <property type="match status" value="1"/>
</dbReference>
<dbReference type="Pfam" id="PF02416">
    <property type="entry name" value="TatA_B_E"/>
    <property type="match status" value="1"/>
</dbReference>
<feature type="chain" id="PRO_0000097945" description="Sec-independent protein translocase protein TatA">
    <location>
        <begin position="1"/>
        <end position="83"/>
    </location>
</feature>
<feature type="transmembrane region" description="Helical" evidence="1">
    <location>
        <begin position="1"/>
        <end position="21"/>
    </location>
</feature>
<feature type="region of interest" description="Disordered" evidence="2">
    <location>
        <begin position="48"/>
        <end position="83"/>
    </location>
</feature>
<feature type="compositionally biased region" description="Polar residues" evidence="2">
    <location>
        <begin position="57"/>
        <end position="77"/>
    </location>
</feature>
<organism>
    <name type="scientific">Mycobacterium tuberculosis (strain ATCC 25618 / H37Rv)</name>
    <dbReference type="NCBI Taxonomy" id="83332"/>
    <lineage>
        <taxon>Bacteria</taxon>
        <taxon>Bacillati</taxon>
        <taxon>Actinomycetota</taxon>
        <taxon>Actinomycetes</taxon>
        <taxon>Mycobacteriales</taxon>
        <taxon>Mycobacteriaceae</taxon>
        <taxon>Mycobacterium</taxon>
        <taxon>Mycobacterium tuberculosis complex</taxon>
    </lineage>
</organism>
<proteinExistence type="evidence at protein level"/>
<accession>P9WGA1</accession>
<accession>L0TBI4</accession>
<accession>P66889</accession>
<accession>Q10703</accession>
<gene>
    <name evidence="1" type="primary">tatA</name>
    <name type="ordered locus">Rv2094c</name>
    <name type="ORF">MTCY49.34c</name>
</gene>
<protein>
    <recommendedName>
        <fullName evidence="1">Sec-independent protein translocase protein TatA</fullName>
    </recommendedName>
</protein>
<keyword id="KW-1003">Cell membrane</keyword>
<keyword id="KW-0472">Membrane</keyword>
<keyword id="KW-0653">Protein transport</keyword>
<keyword id="KW-1185">Reference proteome</keyword>
<keyword id="KW-0811">Translocation</keyword>
<keyword id="KW-0812">Transmembrane</keyword>
<keyword id="KW-1133">Transmembrane helix</keyword>
<keyword id="KW-0813">Transport</keyword>